<keyword id="KW-1185">Reference proteome</keyword>
<evidence type="ECO:0000255" key="1">
    <source>
        <dbReference type="PROSITE-ProRule" id="PRU01186"/>
    </source>
</evidence>
<evidence type="ECO:0000305" key="2"/>
<reference key="1">
    <citation type="journal article" date="2002" name="Nature">
        <title>The genome sequence of Schizosaccharomyces pombe.</title>
        <authorList>
            <person name="Wood V."/>
            <person name="Gwilliam R."/>
            <person name="Rajandream M.A."/>
            <person name="Lyne M.H."/>
            <person name="Lyne R."/>
            <person name="Stewart A."/>
            <person name="Sgouros J.G."/>
            <person name="Peat N."/>
            <person name="Hayles J."/>
            <person name="Baker S.G."/>
            <person name="Basham D."/>
            <person name="Bowman S."/>
            <person name="Brooks K."/>
            <person name="Brown D."/>
            <person name="Brown S."/>
            <person name="Chillingworth T."/>
            <person name="Churcher C.M."/>
            <person name="Collins M."/>
            <person name="Connor R."/>
            <person name="Cronin A."/>
            <person name="Davis P."/>
            <person name="Feltwell T."/>
            <person name="Fraser A."/>
            <person name="Gentles S."/>
            <person name="Goble A."/>
            <person name="Hamlin N."/>
            <person name="Harris D.E."/>
            <person name="Hidalgo J."/>
            <person name="Hodgson G."/>
            <person name="Holroyd S."/>
            <person name="Hornsby T."/>
            <person name="Howarth S."/>
            <person name="Huckle E.J."/>
            <person name="Hunt S."/>
            <person name="Jagels K."/>
            <person name="James K.D."/>
            <person name="Jones L."/>
            <person name="Jones M."/>
            <person name="Leather S."/>
            <person name="McDonald S."/>
            <person name="McLean J."/>
            <person name="Mooney P."/>
            <person name="Moule S."/>
            <person name="Mungall K.L."/>
            <person name="Murphy L.D."/>
            <person name="Niblett D."/>
            <person name="Odell C."/>
            <person name="Oliver K."/>
            <person name="O'Neil S."/>
            <person name="Pearson D."/>
            <person name="Quail M.A."/>
            <person name="Rabbinowitsch E."/>
            <person name="Rutherford K.M."/>
            <person name="Rutter S."/>
            <person name="Saunders D."/>
            <person name="Seeger K."/>
            <person name="Sharp S."/>
            <person name="Skelton J."/>
            <person name="Simmonds M.N."/>
            <person name="Squares R."/>
            <person name="Squares S."/>
            <person name="Stevens K."/>
            <person name="Taylor K."/>
            <person name="Taylor R.G."/>
            <person name="Tivey A."/>
            <person name="Walsh S.V."/>
            <person name="Warren T."/>
            <person name="Whitehead S."/>
            <person name="Woodward J.R."/>
            <person name="Volckaert G."/>
            <person name="Aert R."/>
            <person name="Robben J."/>
            <person name="Grymonprez B."/>
            <person name="Weltjens I."/>
            <person name="Vanstreels E."/>
            <person name="Rieger M."/>
            <person name="Schaefer M."/>
            <person name="Mueller-Auer S."/>
            <person name="Gabel C."/>
            <person name="Fuchs M."/>
            <person name="Duesterhoeft A."/>
            <person name="Fritzc C."/>
            <person name="Holzer E."/>
            <person name="Moestl D."/>
            <person name="Hilbert H."/>
            <person name="Borzym K."/>
            <person name="Langer I."/>
            <person name="Beck A."/>
            <person name="Lehrach H."/>
            <person name="Reinhardt R."/>
            <person name="Pohl T.M."/>
            <person name="Eger P."/>
            <person name="Zimmermann W."/>
            <person name="Wedler H."/>
            <person name="Wambutt R."/>
            <person name="Purnelle B."/>
            <person name="Goffeau A."/>
            <person name="Cadieu E."/>
            <person name="Dreano S."/>
            <person name="Gloux S."/>
            <person name="Lelaure V."/>
            <person name="Mottier S."/>
            <person name="Galibert F."/>
            <person name="Aves S.J."/>
            <person name="Xiang Z."/>
            <person name="Hunt C."/>
            <person name="Moore K."/>
            <person name="Hurst S.M."/>
            <person name="Lucas M."/>
            <person name="Rochet M."/>
            <person name="Gaillardin C."/>
            <person name="Tallada V.A."/>
            <person name="Garzon A."/>
            <person name="Thode G."/>
            <person name="Daga R.R."/>
            <person name="Cruzado L."/>
            <person name="Jimenez J."/>
            <person name="Sanchez M."/>
            <person name="del Rey F."/>
            <person name="Benito J."/>
            <person name="Dominguez A."/>
            <person name="Revuelta J.L."/>
            <person name="Moreno S."/>
            <person name="Armstrong J."/>
            <person name="Forsburg S.L."/>
            <person name="Cerutti L."/>
            <person name="Lowe T."/>
            <person name="McCombie W.R."/>
            <person name="Paulsen I."/>
            <person name="Potashkin J."/>
            <person name="Shpakovski G.V."/>
            <person name="Ussery D."/>
            <person name="Barrell B.G."/>
            <person name="Nurse P."/>
        </authorList>
    </citation>
    <scope>NUCLEOTIDE SEQUENCE [LARGE SCALE GENOMIC DNA]</scope>
    <source>
        <strain>972 / ATCC 24843</strain>
    </source>
</reference>
<comment type="similarity">
    <text evidence="2">To yeast YBL086c.</text>
</comment>
<feature type="chain" id="PRO_0000116891" description="Uncharacterized protein C1494.08c">
    <location>
        <begin position="1"/>
        <end position="274"/>
    </location>
</feature>
<feature type="domain" description="C2 NT-type" evidence="1">
    <location>
        <begin position="3"/>
        <end position="141"/>
    </location>
</feature>
<organism>
    <name type="scientific">Schizosaccharomyces pombe (strain 972 / ATCC 24843)</name>
    <name type="common">Fission yeast</name>
    <dbReference type="NCBI Taxonomy" id="284812"/>
    <lineage>
        <taxon>Eukaryota</taxon>
        <taxon>Fungi</taxon>
        <taxon>Dikarya</taxon>
        <taxon>Ascomycota</taxon>
        <taxon>Taphrinomycotina</taxon>
        <taxon>Schizosaccharomycetes</taxon>
        <taxon>Schizosaccharomycetales</taxon>
        <taxon>Schizosaccharomycetaceae</taxon>
        <taxon>Schizosaccharomyces</taxon>
    </lineage>
</organism>
<dbReference type="EMBL" id="CU329672">
    <property type="protein sequence ID" value="CAA19306.1"/>
    <property type="molecule type" value="Genomic_DNA"/>
</dbReference>
<dbReference type="PIR" id="T41009">
    <property type="entry name" value="T41009"/>
</dbReference>
<dbReference type="RefSeq" id="NP_588533.1">
    <property type="nucleotide sequence ID" value="NM_001023521.2"/>
</dbReference>
<dbReference type="SMR" id="O60082"/>
<dbReference type="BioGRID" id="275575">
    <property type="interactions" value="39"/>
</dbReference>
<dbReference type="FunCoup" id="O60082">
    <property type="interactions" value="11"/>
</dbReference>
<dbReference type="STRING" id="284812.O60082"/>
<dbReference type="iPTMnet" id="O60082"/>
<dbReference type="SwissPalm" id="O60082"/>
<dbReference type="PaxDb" id="4896-SPCC1494.08c.1"/>
<dbReference type="EnsemblFungi" id="SPCC1494.08c.1">
    <property type="protein sequence ID" value="SPCC1494.08c.1:pep"/>
    <property type="gene ID" value="SPCC1494.08c"/>
</dbReference>
<dbReference type="KEGG" id="spo:2539001"/>
<dbReference type="PomBase" id="SPCC1494.08c"/>
<dbReference type="VEuPathDB" id="FungiDB:SPCC1494.08c"/>
<dbReference type="eggNOG" id="ENOG502QRRN">
    <property type="taxonomic scope" value="Eukaryota"/>
</dbReference>
<dbReference type="HOGENOM" id="CLU_023134_0_0_1"/>
<dbReference type="InParanoid" id="O60082"/>
<dbReference type="OMA" id="MSLPRFC"/>
<dbReference type="PhylomeDB" id="O60082"/>
<dbReference type="PRO" id="PR:O60082"/>
<dbReference type="Proteomes" id="UP000002485">
    <property type="component" value="Chromosome III"/>
</dbReference>
<dbReference type="GO" id="GO:0005938">
    <property type="term" value="C:cell cortex"/>
    <property type="evidence" value="ECO:0007005"/>
    <property type="project" value="PomBase"/>
</dbReference>
<dbReference type="GO" id="GO:0008289">
    <property type="term" value="F:lipid binding"/>
    <property type="evidence" value="ECO:0000255"/>
    <property type="project" value="PomBase"/>
</dbReference>
<dbReference type="InterPro" id="IPR039931">
    <property type="entry name" value="EEIG1/2-like"/>
</dbReference>
<dbReference type="InterPro" id="IPR019448">
    <property type="entry name" value="NT-C2"/>
</dbReference>
<dbReference type="PANTHER" id="PTHR21456:SF1">
    <property type="entry name" value="C2 NT-TYPE DOMAIN-CONTAINING PROTEIN"/>
    <property type="match status" value="1"/>
</dbReference>
<dbReference type="PANTHER" id="PTHR21456">
    <property type="entry name" value="FAMILY WITH SEQUENCE SIMILARITY 102"/>
    <property type="match status" value="1"/>
</dbReference>
<dbReference type="Pfam" id="PF10358">
    <property type="entry name" value="NT-C2"/>
    <property type="match status" value="1"/>
</dbReference>
<dbReference type="PROSITE" id="PS51840">
    <property type="entry name" value="C2_NT"/>
    <property type="match status" value="1"/>
</dbReference>
<protein>
    <recommendedName>
        <fullName>Uncharacterized protein C1494.08c</fullName>
    </recommendedName>
</protein>
<proteinExistence type="predicted"/>
<gene>
    <name type="ORF">SPCC1494.08c</name>
</gene>
<name>YQK8_SCHPO</name>
<sequence>MSIFIPKARRPTFELHLRIHDVVNIPLITGVIFVKWNIEGIHSRHANDQTEAEPVLEHRVTWEYETCVSVRMIIDNDNLLKDKFLILQVLCDSHTDSGVIRLGILKINLTEYVYVGQDTRKYLLADSKINATIRIGISLKQTSGNKDFRVSKTLGKPQVFSGLTGLLTDGKELKRRDDEVYTSTGLASAWAEKMLHSIKDFNQKTTVFHMHTRNNKYDTREIVDDIFFGGTGWAEPPKIADIVDAAGDTDLISLEIRQKSWVLPSEKVLNKRLP</sequence>
<accession>O60082</accession>